<evidence type="ECO:0000255" key="1">
    <source>
        <dbReference type="HAMAP-Rule" id="MF_00079"/>
    </source>
</evidence>
<sequence length="284" mass="30481">MLRVAVPNKGALSEPATEILAEAGYRRRTDSKDLTVIDPVNNVEFFFLRPKDIAIYVGSGELDFGITGRDLVCDSGAQVRERLALGFGSSSFRYAAPAGRNWTTADLAGMRIATAYPNLVRKDLATKGIEATVIRLDGAVEISVQLGVADAIADVVGSGRTLSQHDLVAFGEPLCDSEAVLIERAGTDGQDQTEARDQLVARVQGVVFGQQYLMLDYDCPRSALKKATAITPGLESPTIAPLADPDWVAIRALVPRRDVNGIMDELAAIGAKAILASDIRFCRF</sequence>
<accession>C1AQ37</accession>
<keyword id="KW-0028">Amino-acid biosynthesis</keyword>
<keyword id="KW-0067">ATP-binding</keyword>
<keyword id="KW-0963">Cytoplasm</keyword>
<keyword id="KW-0328">Glycosyltransferase</keyword>
<keyword id="KW-0368">Histidine biosynthesis</keyword>
<keyword id="KW-0460">Magnesium</keyword>
<keyword id="KW-0479">Metal-binding</keyword>
<keyword id="KW-0547">Nucleotide-binding</keyword>
<keyword id="KW-0808">Transferase</keyword>
<protein>
    <recommendedName>
        <fullName evidence="1">ATP phosphoribosyltransferase</fullName>
        <shortName evidence="1">ATP-PRT</shortName>
        <shortName evidence="1">ATP-PRTase</shortName>
        <ecNumber evidence="1">2.4.2.17</ecNumber>
    </recommendedName>
</protein>
<feature type="chain" id="PRO_1000118255" description="ATP phosphoribosyltransferase">
    <location>
        <begin position="1"/>
        <end position="284"/>
    </location>
</feature>
<reference key="1">
    <citation type="journal article" date="2009" name="Vaccine">
        <title>Whole genome sequence analysis of Mycobacterium bovis bacillus Calmette-Guerin (BCG) Tokyo 172: a comparative study of BCG vaccine substrains.</title>
        <authorList>
            <person name="Seki M."/>
            <person name="Honda I."/>
            <person name="Fujita I."/>
            <person name="Yano I."/>
            <person name="Yamamoto S."/>
            <person name="Koyama A."/>
        </authorList>
    </citation>
    <scope>NUCLEOTIDE SEQUENCE [LARGE SCALE GENOMIC DNA]</scope>
    <source>
        <strain>BCG / Tokyo 172 / ATCC 35737 / TMC 1019</strain>
    </source>
</reference>
<name>HIS1_MYCBT</name>
<gene>
    <name evidence="1" type="primary">hisG</name>
    <name type="ordered locus">JTY_2132</name>
</gene>
<organism>
    <name type="scientific">Mycobacterium bovis (strain BCG / Tokyo 172 / ATCC 35737 / TMC 1019)</name>
    <dbReference type="NCBI Taxonomy" id="561275"/>
    <lineage>
        <taxon>Bacteria</taxon>
        <taxon>Bacillati</taxon>
        <taxon>Actinomycetota</taxon>
        <taxon>Actinomycetes</taxon>
        <taxon>Mycobacteriales</taxon>
        <taxon>Mycobacteriaceae</taxon>
        <taxon>Mycobacterium</taxon>
        <taxon>Mycobacterium tuberculosis complex</taxon>
    </lineage>
</organism>
<dbReference type="EC" id="2.4.2.17" evidence="1"/>
<dbReference type="EMBL" id="AP010918">
    <property type="protein sequence ID" value="BAH26416.1"/>
    <property type="molecule type" value="Genomic_DNA"/>
</dbReference>
<dbReference type="RefSeq" id="WP_003411047.1">
    <property type="nucleotide sequence ID" value="NZ_CP014566.1"/>
</dbReference>
<dbReference type="SMR" id="C1AQ37"/>
<dbReference type="GeneID" id="45426096"/>
<dbReference type="KEGG" id="mbt:JTY_2132"/>
<dbReference type="HOGENOM" id="CLU_038115_1_1_11"/>
<dbReference type="UniPathway" id="UPA00031">
    <property type="reaction ID" value="UER00006"/>
</dbReference>
<dbReference type="GO" id="GO:0005737">
    <property type="term" value="C:cytoplasm"/>
    <property type="evidence" value="ECO:0007669"/>
    <property type="project" value="UniProtKB-SubCell"/>
</dbReference>
<dbReference type="GO" id="GO:0005524">
    <property type="term" value="F:ATP binding"/>
    <property type="evidence" value="ECO:0007669"/>
    <property type="project" value="UniProtKB-KW"/>
</dbReference>
<dbReference type="GO" id="GO:0003879">
    <property type="term" value="F:ATP phosphoribosyltransferase activity"/>
    <property type="evidence" value="ECO:0007669"/>
    <property type="project" value="UniProtKB-UniRule"/>
</dbReference>
<dbReference type="GO" id="GO:0000287">
    <property type="term" value="F:magnesium ion binding"/>
    <property type="evidence" value="ECO:0007669"/>
    <property type="project" value="UniProtKB-UniRule"/>
</dbReference>
<dbReference type="GO" id="GO:0000105">
    <property type="term" value="P:L-histidine biosynthetic process"/>
    <property type="evidence" value="ECO:0007669"/>
    <property type="project" value="UniProtKB-UniRule"/>
</dbReference>
<dbReference type="CDD" id="cd13591">
    <property type="entry name" value="PBP2_HisGL1"/>
    <property type="match status" value="1"/>
</dbReference>
<dbReference type="FunFam" id="3.30.70.120:FF:000003">
    <property type="entry name" value="ATP phosphoribosyltransferase"/>
    <property type="match status" value="1"/>
</dbReference>
<dbReference type="FunFam" id="3.40.190.10:FF:000115">
    <property type="entry name" value="ATP phosphoribosyltransferase"/>
    <property type="match status" value="1"/>
</dbReference>
<dbReference type="Gene3D" id="3.30.70.120">
    <property type="match status" value="1"/>
</dbReference>
<dbReference type="Gene3D" id="3.40.190.10">
    <property type="entry name" value="Periplasmic binding protein-like II"/>
    <property type="match status" value="2"/>
</dbReference>
<dbReference type="HAMAP" id="MF_00079">
    <property type="entry name" value="HisG_Long"/>
    <property type="match status" value="1"/>
</dbReference>
<dbReference type="InterPro" id="IPR020621">
    <property type="entry name" value="ATP-PRT_HisG_long"/>
</dbReference>
<dbReference type="InterPro" id="IPR013820">
    <property type="entry name" value="ATP_PRibTrfase_cat"/>
</dbReference>
<dbReference type="InterPro" id="IPR018198">
    <property type="entry name" value="ATP_PRibTrfase_CS"/>
</dbReference>
<dbReference type="InterPro" id="IPR001348">
    <property type="entry name" value="ATP_PRibTrfase_HisG"/>
</dbReference>
<dbReference type="InterPro" id="IPR013115">
    <property type="entry name" value="HisG_C"/>
</dbReference>
<dbReference type="InterPro" id="IPR011322">
    <property type="entry name" value="N-reg_PII-like_a/b"/>
</dbReference>
<dbReference type="InterPro" id="IPR015867">
    <property type="entry name" value="N-reg_PII/ATP_PRibTrfase_C"/>
</dbReference>
<dbReference type="NCBIfam" id="TIGR00070">
    <property type="entry name" value="hisG"/>
    <property type="match status" value="1"/>
</dbReference>
<dbReference type="NCBIfam" id="TIGR03455">
    <property type="entry name" value="HisG_C-term"/>
    <property type="match status" value="1"/>
</dbReference>
<dbReference type="PANTHER" id="PTHR21403:SF8">
    <property type="entry name" value="ATP PHOSPHORIBOSYLTRANSFERASE"/>
    <property type="match status" value="1"/>
</dbReference>
<dbReference type="PANTHER" id="PTHR21403">
    <property type="entry name" value="ATP PHOSPHORIBOSYLTRANSFERASE ATP-PRTASE"/>
    <property type="match status" value="1"/>
</dbReference>
<dbReference type="Pfam" id="PF01634">
    <property type="entry name" value="HisG"/>
    <property type="match status" value="1"/>
</dbReference>
<dbReference type="Pfam" id="PF08029">
    <property type="entry name" value="HisG_C"/>
    <property type="match status" value="1"/>
</dbReference>
<dbReference type="SUPFAM" id="SSF54913">
    <property type="entry name" value="GlnB-like"/>
    <property type="match status" value="1"/>
</dbReference>
<dbReference type="SUPFAM" id="SSF53850">
    <property type="entry name" value="Periplasmic binding protein-like II"/>
    <property type="match status" value="1"/>
</dbReference>
<dbReference type="PROSITE" id="PS01316">
    <property type="entry name" value="ATP_P_PHORIBOSYLTR"/>
    <property type="match status" value="1"/>
</dbReference>
<proteinExistence type="inferred from homology"/>
<comment type="function">
    <text evidence="1">Catalyzes the condensation of ATP and 5-phosphoribose 1-diphosphate to form N'-(5'-phosphoribosyl)-ATP (PR-ATP). Has a crucial role in the pathway because the rate of histidine biosynthesis seems to be controlled primarily by regulation of HisG enzymatic activity.</text>
</comment>
<comment type="catalytic activity">
    <reaction evidence="1">
        <text>1-(5-phospho-beta-D-ribosyl)-ATP + diphosphate = 5-phospho-alpha-D-ribose 1-diphosphate + ATP</text>
        <dbReference type="Rhea" id="RHEA:18473"/>
        <dbReference type="ChEBI" id="CHEBI:30616"/>
        <dbReference type="ChEBI" id="CHEBI:33019"/>
        <dbReference type="ChEBI" id="CHEBI:58017"/>
        <dbReference type="ChEBI" id="CHEBI:73183"/>
        <dbReference type="EC" id="2.4.2.17"/>
    </reaction>
</comment>
<comment type="cofactor">
    <cofactor evidence="1">
        <name>Mg(2+)</name>
        <dbReference type="ChEBI" id="CHEBI:18420"/>
    </cofactor>
</comment>
<comment type="activity regulation">
    <text evidence="1">Feedback inhibited by histidine.</text>
</comment>
<comment type="pathway">
    <text evidence="1">Amino-acid biosynthesis; L-histidine biosynthesis; L-histidine from 5-phospho-alpha-D-ribose 1-diphosphate: step 1/9.</text>
</comment>
<comment type="subunit">
    <text evidence="1">Equilibrium between an active dimeric form, an inactive hexameric form and higher aggregates. Interconversion between the various forms is largely reversible and is influenced by the natural substrates and inhibitors of the enzyme.</text>
</comment>
<comment type="subcellular location">
    <subcellularLocation>
        <location evidence="1">Cytoplasm</location>
    </subcellularLocation>
</comment>
<comment type="similarity">
    <text evidence="1">Belongs to the ATP phosphoribosyltransferase family. Long subfamily.</text>
</comment>